<feature type="chain" id="PRO_0000065203" description="Uncharacterized protein C29E4.11">
    <location>
        <begin position="1"/>
        <end position="208"/>
    </location>
</feature>
<feature type="region of interest" description="Disordered" evidence="1">
    <location>
        <begin position="1"/>
        <end position="78"/>
    </location>
</feature>
<feature type="region of interest" description="Disordered" evidence="1">
    <location>
        <begin position="154"/>
        <end position="208"/>
    </location>
</feature>
<feature type="compositionally biased region" description="Basic residues" evidence="1">
    <location>
        <begin position="40"/>
        <end position="51"/>
    </location>
</feature>
<feature type="compositionally biased region" description="Polar residues" evidence="1">
    <location>
        <begin position="179"/>
        <end position="197"/>
    </location>
</feature>
<dbReference type="EMBL" id="FO080706">
    <property type="status" value="NOT_ANNOTATED_CDS"/>
    <property type="molecule type" value="Genomic_DNA"/>
</dbReference>
<dbReference type="PIR" id="S44765">
    <property type="entry name" value="S44765"/>
</dbReference>
<dbReference type="RefSeq" id="NP_001337306.1">
    <property type="nucleotide sequence ID" value="NM_001350364.4"/>
</dbReference>
<dbReference type="FunCoup" id="P34347">
    <property type="interactions" value="228"/>
</dbReference>
<dbReference type="GeneID" id="32091597"/>
<dbReference type="InParanoid" id="P34347"/>
<dbReference type="OrthoDB" id="10671170at2759"/>
<dbReference type="Proteomes" id="UP000001940">
    <property type="component" value="Chromosome III"/>
</dbReference>
<sequence>MDLFDLIFPPPPQSPSKLHPTQNHILPPEPLNRDFGDTRKNHKKAQPRRTTKAPSTSSPTIHDRQTPPRPTTPKSPTEKLLPIYHKFADGTEVVNPAAYAQRGFGWVKQNNTARVSWAKWAQSTKKCDDDIYGLKWIEERYPNWRDSNFRIRERRRSRSRSPQLSDNGSEDISIYLGRANSSSPNPTATGSETSYGSPTDAIYIPRNY</sequence>
<organism>
    <name type="scientific">Caenorhabditis elegans</name>
    <dbReference type="NCBI Taxonomy" id="6239"/>
    <lineage>
        <taxon>Eukaryota</taxon>
        <taxon>Metazoa</taxon>
        <taxon>Ecdysozoa</taxon>
        <taxon>Nematoda</taxon>
        <taxon>Chromadorea</taxon>
        <taxon>Rhabditida</taxon>
        <taxon>Rhabditina</taxon>
        <taxon>Rhabditomorpha</taxon>
        <taxon>Rhabditoidea</taxon>
        <taxon>Rhabditidae</taxon>
        <taxon>Peloderinae</taxon>
        <taxon>Caenorhabditis</taxon>
    </lineage>
</organism>
<evidence type="ECO:0000256" key="1">
    <source>
        <dbReference type="SAM" id="MobiDB-lite"/>
    </source>
</evidence>
<gene>
    <name type="ORF">C29E4.11</name>
</gene>
<accession>P34347</accession>
<proteinExistence type="predicted"/>
<protein>
    <recommendedName>
        <fullName>Uncharacterized protein C29E4.11</fullName>
    </recommendedName>
</protein>
<reference key="1">
    <citation type="journal article" date="1994" name="Nature">
        <title>2.2 Mb of contiguous nucleotide sequence from chromosome III of C. elegans.</title>
        <authorList>
            <person name="Wilson R."/>
            <person name="Ainscough R."/>
            <person name="Anderson K."/>
            <person name="Baynes C."/>
            <person name="Berks M."/>
            <person name="Bonfield J."/>
            <person name="Burton J."/>
            <person name="Connell M."/>
            <person name="Copsey T."/>
            <person name="Cooper J."/>
            <person name="Coulson A."/>
            <person name="Craxton M."/>
            <person name="Dear S."/>
            <person name="Du Z."/>
            <person name="Durbin R."/>
            <person name="Favello A."/>
            <person name="Fraser A."/>
            <person name="Fulton L."/>
            <person name="Gardner A."/>
            <person name="Green P."/>
            <person name="Hawkins T."/>
            <person name="Hillier L."/>
            <person name="Jier M."/>
            <person name="Johnston L."/>
            <person name="Jones M."/>
            <person name="Kershaw J."/>
            <person name="Kirsten J."/>
            <person name="Laisster N."/>
            <person name="Latreille P."/>
            <person name="Lightning J."/>
            <person name="Lloyd C."/>
            <person name="Mortimore B."/>
            <person name="O'Callaghan M."/>
            <person name="Parsons J."/>
            <person name="Percy C."/>
            <person name="Rifken L."/>
            <person name="Roopra A."/>
            <person name="Saunders D."/>
            <person name="Shownkeen R."/>
            <person name="Sims M."/>
            <person name="Smaldon N."/>
            <person name="Smith A."/>
            <person name="Smith M."/>
            <person name="Sonnhammer E."/>
            <person name="Staden R."/>
            <person name="Sulston J."/>
            <person name="Thierry-Mieg J."/>
            <person name="Thomas K."/>
            <person name="Vaudin M."/>
            <person name="Vaughan K."/>
            <person name="Waterston R."/>
            <person name="Watson A."/>
            <person name="Weinstock L."/>
            <person name="Wilkinson-Sproat J."/>
            <person name="Wohldman P."/>
        </authorList>
    </citation>
    <scope>NUCLEOTIDE SEQUENCE [LARGE SCALE GENOMIC DNA]</scope>
    <source>
        <strain>Bristol N2</strain>
    </source>
</reference>
<reference key="2">
    <citation type="journal article" date="1998" name="Science">
        <title>Genome sequence of the nematode C. elegans: a platform for investigating biology.</title>
        <authorList>
            <consortium name="The C. elegans sequencing consortium"/>
        </authorList>
    </citation>
    <scope>NUCLEOTIDE SEQUENCE [LARGE SCALE GENOMIC DNA]</scope>
    <source>
        <strain>Bristol N2</strain>
    </source>
</reference>
<keyword id="KW-1185">Reference proteome</keyword>
<name>YK6B_CAEEL</name>